<accession>B9L718</accession>
<sequence>MEYFAKRIIPCLDVKDGRVVKGVNFVGLRDAGDPVEAAIRYNEEGADELTFLDITASHEGRKPIVDIVKEVAKEVFIPLTVGGGISELSDIYDLLNVGCDKVSINSAAVKNPDFINKSSKRFGSQCIVVAIDVKKIAPNKWHVFIKGGREDTGLDAIEWAKEVVDRGAGEILLTSMDTDGTKAGFDIEITEIISKLVHVPVIASGGAGKMEHFKEVFEHSADAALAASIFHFKEIDIMDLKQYLHKNNISVRIN</sequence>
<keyword id="KW-0028">Amino-acid biosynthesis</keyword>
<keyword id="KW-0963">Cytoplasm</keyword>
<keyword id="KW-0368">Histidine biosynthesis</keyword>
<keyword id="KW-0456">Lyase</keyword>
<protein>
    <recommendedName>
        <fullName evidence="1">Imidazole glycerol phosphate synthase subunit HisF</fullName>
        <ecNumber evidence="1">4.3.2.10</ecNumber>
    </recommendedName>
    <alternativeName>
        <fullName evidence="1">IGP synthase cyclase subunit</fullName>
    </alternativeName>
    <alternativeName>
        <fullName evidence="1">IGP synthase subunit HisF</fullName>
    </alternativeName>
    <alternativeName>
        <fullName evidence="1">ImGP synthase subunit HisF</fullName>
        <shortName evidence="1">IGPS subunit HisF</shortName>
    </alternativeName>
</protein>
<proteinExistence type="inferred from homology"/>
<name>HIS6_NAUPA</name>
<evidence type="ECO:0000255" key="1">
    <source>
        <dbReference type="HAMAP-Rule" id="MF_01013"/>
    </source>
</evidence>
<feature type="chain" id="PRO_1000148933" description="Imidazole glycerol phosphate synthase subunit HisF">
    <location>
        <begin position="1"/>
        <end position="254"/>
    </location>
</feature>
<feature type="active site" evidence="1">
    <location>
        <position position="13"/>
    </location>
</feature>
<feature type="active site" evidence="1">
    <location>
        <position position="132"/>
    </location>
</feature>
<organism>
    <name type="scientific">Nautilia profundicola (strain ATCC BAA-1463 / DSM 18972 / AmH)</name>
    <dbReference type="NCBI Taxonomy" id="598659"/>
    <lineage>
        <taxon>Bacteria</taxon>
        <taxon>Pseudomonadati</taxon>
        <taxon>Campylobacterota</taxon>
        <taxon>Epsilonproteobacteria</taxon>
        <taxon>Nautiliales</taxon>
        <taxon>Nautiliaceae</taxon>
        <taxon>Nautilia</taxon>
    </lineage>
</organism>
<comment type="function">
    <text evidence="1">IGPS catalyzes the conversion of PRFAR and glutamine to IGP, AICAR and glutamate. The HisF subunit catalyzes the cyclization activity that produces IGP and AICAR from PRFAR using the ammonia provided by the HisH subunit.</text>
</comment>
<comment type="catalytic activity">
    <reaction evidence="1">
        <text>5-[(5-phospho-1-deoxy-D-ribulos-1-ylimino)methylamino]-1-(5-phospho-beta-D-ribosyl)imidazole-4-carboxamide + L-glutamine = D-erythro-1-(imidazol-4-yl)glycerol 3-phosphate + 5-amino-1-(5-phospho-beta-D-ribosyl)imidazole-4-carboxamide + L-glutamate + H(+)</text>
        <dbReference type="Rhea" id="RHEA:24793"/>
        <dbReference type="ChEBI" id="CHEBI:15378"/>
        <dbReference type="ChEBI" id="CHEBI:29985"/>
        <dbReference type="ChEBI" id="CHEBI:58278"/>
        <dbReference type="ChEBI" id="CHEBI:58359"/>
        <dbReference type="ChEBI" id="CHEBI:58475"/>
        <dbReference type="ChEBI" id="CHEBI:58525"/>
        <dbReference type="EC" id="4.3.2.10"/>
    </reaction>
</comment>
<comment type="pathway">
    <text evidence="1">Amino-acid biosynthesis; L-histidine biosynthesis; L-histidine from 5-phospho-alpha-D-ribose 1-diphosphate: step 5/9.</text>
</comment>
<comment type="subunit">
    <text evidence="1">Heterodimer of HisH and HisF.</text>
</comment>
<comment type="subcellular location">
    <subcellularLocation>
        <location evidence="1">Cytoplasm</location>
    </subcellularLocation>
</comment>
<comment type="similarity">
    <text evidence="1">Belongs to the HisA/HisF family.</text>
</comment>
<reference key="1">
    <citation type="journal article" date="2009" name="PLoS Genet.">
        <title>Adaptations to submarine hydrothermal environments exemplified by the genome of Nautilia profundicola.</title>
        <authorList>
            <person name="Campbell B.J."/>
            <person name="Smith J.L."/>
            <person name="Hanson T.E."/>
            <person name="Klotz M.G."/>
            <person name="Stein L.Y."/>
            <person name="Lee C.K."/>
            <person name="Wu D."/>
            <person name="Robinson J.M."/>
            <person name="Khouri H.M."/>
            <person name="Eisen J.A."/>
            <person name="Cary S.C."/>
        </authorList>
    </citation>
    <scope>NUCLEOTIDE SEQUENCE [LARGE SCALE GENOMIC DNA]</scope>
    <source>
        <strain>ATCC BAA-1463 / DSM 18972 / AmH</strain>
    </source>
</reference>
<dbReference type="EC" id="4.3.2.10" evidence="1"/>
<dbReference type="EMBL" id="CP001279">
    <property type="protein sequence ID" value="ACM93221.1"/>
    <property type="molecule type" value="Genomic_DNA"/>
</dbReference>
<dbReference type="RefSeq" id="WP_015902273.1">
    <property type="nucleotide sequence ID" value="NC_012115.1"/>
</dbReference>
<dbReference type="SMR" id="B9L718"/>
<dbReference type="STRING" id="598659.NAMH_1790"/>
<dbReference type="KEGG" id="nam:NAMH_1790"/>
<dbReference type="eggNOG" id="COG0107">
    <property type="taxonomic scope" value="Bacteria"/>
</dbReference>
<dbReference type="HOGENOM" id="CLU_048577_4_0_7"/>
<dbReference type="OrthoDB" id="9807749at2"/>
<dbReference type="UniPathway" id="UPA00031">
    <property type="reaction ID" value="UER00010"/>
</dbReference>
<dbReference type="Proteomes" id="UP000000448">
    <property type="component" value="Chromosome"/>
</dbReference>
<dbReference type="GO" id="GO:0005737">
    <property type="term" value="C:cytoplasm"/>
    <property type="evidence" value="ECO:0007669"/>
    <property type="project" value="UniProtKB-SubCell"/>
</dbReference>
<dbReference type="GO" id="GO:0000107">
    <property type="term" value="F:imidazoleglycerol-phosphate synthase activity"/>
    <property type="evidence" value="ECO:0007669"/>
    <property type="project" value="UniProtKB-UniRule"/>
</dbReference>
<dbReference type="GO" id="GO:0016829">
    <property type="term" value="F:lyase activity"/>
    <property type="evidence" value="ECO:0007669"/>
    <property type="project" value="UniProtKB-KW"/>
</dbReference>
<dbReference type="GO" id="GO:0000105">
    <property type="term" value="P:L-histidine biosynthetic process"/>
    <property type="evidence" value="ECO:0007669"/>
    <property type="project" value="UniProtKB-UniRule"/>
</dbReference>
<dbReference type="CDD" id="cd04731">
    <property type="entry name" value="HisF"/>
    <property type="match status" value="1"/>
</dbReference>
<dbReference type="FunFam" id="3.20.20.70:FF:000006">
    <property type="entry name" value="Imidazole glycerol phosphate synthase subunit HisF"/>
    <property type="match status" value="1"/>
</dbReference>
<dbReference type="Gene3D" id="3.20.20.70">
    <property type="entry name" value="Aldolase class I"/>
    <property type="match status" value="1"/>
</dbReference>
<dbReference type="HAMAP" id="MF_01013">
    <property type="entry name" value="HisF"/>
    <property type="match status" value="1"/>
</dbReference>
<dbReference type="InterPro" id="IPR013785">
    <property type="entry name" value="Aldolase_TIM"/>
</dbReference>
<dbReference type="InterPro" id="IPR006062">
    <property type="entry name" value="His_biosynth"/>
</dbReference>
<dbReference type="InterPro" id="IPR004651">
    <property type="entry name" value="HisF"/>
</dbReference>
<dbReference type="InterPro" id="IPR050064">
    <property type="entry name" value="IGPS_HisA/HisF"/>
</dbReference>
<dbReference type="InterPro" id="IPR011060">
    <property type="entry name" value="RibuloseP-bd_barrel"/>
</dbReference>
<dbReference type="NCBIfam" id="TIGR00735">
    <property type="entry name" value="hisF"/>
    <property type="match status" value="1"/>
</dbReference>
<dbReference type="PANTHER" id="PTHR21235:SF2">
    <property type="entry name" value="IMIDAZOLE GLYCEROL PHOSPHATE SYNTHASE HISHF"/>
    <property type="match status" value="1"/>
</dbReference>
<dbReference type="PANTHER" id="PTHR21235">
    <property type="entry name" value="IMIDAZOLE GLYCEROL PHOSPHATE SYNTHASE SUBUNIT HISF/H IGP SYNTHASE SUBUNIT HISF/H"/>
    <property type="match status" value="1"/>
</dbReference>
<dbReference type="Pfam" id="PF00977">
    <property type="entry name" value="His_biosynth"/>
    <property type="match status" value="1"/>
</dbReference>
<dbReference type="SUPFAM" id="SSF51366">
    <property type="entry name" value="Ribulose-phoshate binding barrel"/>
    <property type="match status" value="1"/>
</dbReference>
<gene>
    <name evidence="1" type="primary">hisF</name>
    <name type="ordered locus">NAMH_1790</name>
</gene>